<name>Y1235_HAEIN</name>
<accession>P44131</accession>
<gene>
    <name type="ordered locus">HI_1235</name>
</gene>
<reference key="1">
    <citation type="journal article" date="1995" name="Science">
        <title>Whole-genome random sequencing and assembly of Haemophilus influenzae Rd.</title>
        <authorList>
            <person name="Fleischmann R.D."/>
            <person name="Adams M.D."/>
            <person name="White O."/>
            <person name="Clayton R.A."/>
            <person name="Kirkness E.F."/>
            <person name="Kerlavage A.R."/>
            <person name="Bult C.J."/>
            <person name="Tomb J.-F."/>
            <person name="Dougherty B.A."/>
            <person name="Merrick J.M."/>
            <person name="McKenney K."/>
            <person name="Sutton G.G."/>
            <person name="FitzHugh W."/>
            <person name="Fields C.A."/>
            <person name="Gocayne J.D."/>
            <person name="Scott J.D."/>
            <person name="Shirley R."/>
            <person name="Liu L.-I."/>
            <person name="Glodek A."/>
            <person name="Kelley J.M."/>
            <person name="Weidman J.F."/>
            <person name="Phillips C.A."/>
            <person name="Spriggs T."/>
            <person name="Hedblom E."/>
            <person name="Cotton M.D."/>
            <person name="Utterback T.R."/>
            <person name="Hanna M.C."/>
            <person name="Nguyen D.T."/>
            <person name="Saudek D.M."/>
            <person name="Brandon R.C."/>
            <person name="Fine L.D."/>
            <person name="Fritchman J.L."/>
            <person name="Fuhrmann J.L."/>
            <person name="Geoghagen N.S.M."/>
            <person name="Gnehm C.L."/>
            <person name="McDonald L.A."/>
            <person name="Small K.V."/>
            <person name="Fraser C.M."/>
            <person name="Smith H.O."/>
            <person name="Venter J.C."/>
        </authorList>
    </citation>
    <scope>NUCLEOTIDE SEQUENCE [LARGE SCALE GENOMIC DNA]</scope>
    <source>
        <strain>ATCC 51907 / DSM 11121 / KW20 / Rd</strain>
    </source>
</reference>
<feature type="signal peptide" evidence="1">
    <location>
        <begin position="1"/>
        <end position="19"/>
    </location>
</feature>
<feature type="chain" id="PRO_0000013967" description="Uncharacterized protein HI_1235">
    <location>
        <begin position="20"/>
        <end position="155"/>
    </location>
</feature>
<proteinExistence type="inferred from homology"/>
<sequence length="155" mass="17229">MPLSKTLVQKLQQAGMAIANNQPQIKFTPLSISDEKGKVALDLNIALVPNPKFDLMHSGLYKQFKDFSINFDVNKETAISLLSKFVPENQKQDLVYRMDELIAEGEANGIIVNTDKTVTLTLALENNDLKLNGKPIPEEQLKVVLFILVMGGFGR</sequence>
<dbReference type="EMBL" id="L42023">
    <property type="protein sequence ID" value="AAC22891.1"/>
    <property type="molecule type" value="Genomic_DNA"/>
</dbReference>
<dbReference type="PIR" id="E64022">
    <property type="entry name" value="E64022"/>
</dbReference>
<dbReference type="STRING" id="71421.HI_1235"/>
<dbReference type="EnsemblBacteria" id="AAC22891">
    <property type="protein sequence ID" value="AAC22891"/>
    <property type="gene ID" value="HI_1235"/>
</dbReference>
<dbReference type="KEGG" id="hin:HI_1235"/>
<dbReference type="eggNOG" id="COG5339">
    <property type="taxonomic scope" value="Bacteria"/>
</dbReference>
<dbReference type="HOGENOM" id="CLU_1693031_0_0_6"/>
<dbReference type="Proteomes" id="UP000000579">
    <property type="component" value="Chromosome"/>
</dbReference>
<dbReference type="InterPro" id="IPR010352">
    <property type="entry name" value="DUF945"/>
</dbReference>
<dbReference type="Pfam" id="PF06097">
    <property type="entry name" value="DUF945"/>
    <property type="match status" value="1"/>
</dbReference>
<evidence type="ECO:0000255" key="1"/>
<organism>
    <name type="scientific">Haemophilus influenzae (strain ATCC 51907 / DSM 11121 / KW20 / Rd)</name>
    <dbReference type="NCBI Taxonomy" id="71421"/>
    <lineage>
        <taxon>Bacteria</taxon>
        <taxon>Pseudomonadati</taxon>
        <taxon>Pseudomonadota</taxon>
        <taxon>Gammaproteobacteria</taxon>
        <taxon>Pasteurellales</taxon>
        <taxon>Pasteurellaceae</taxon>
        <taxon>Haemophilus</taxon>
    </lineage>
</organism>
<protein>
    <recommendedName>
        <fullName>Uncharacterized protein HI_1235</fullName>
    </recommendedName>
</protein>
<keyword id="KW-1185">Reference proteome</keyword>
<keyword id="KW-0732">Signal</keyword>